<organism>
    <name type="scientific">Homo sapiens</name>
    <name type="common">Human</name>
    <dbReference type="NCBI Taxonomy" id="9606"/>
    <lineage>
        <taxon>Eukaryota</taxon>
        <taxon>Metazoa</taxon>
        <taxon>Chordata</taxon>
        <taxon>Craniata</taxon>
        <taxon>Vertebrata</taxon>
        <taxon>Euteleostomi</taxon>
        <taxon>Mammalia</taxon>
        <taxon>Eutheria</taxon>
        <taxon>Euarchontoglires</taxon>
        <taxon>Primates</taxon>
        <taxon>Haplorrhini</taxon>
        <taxon>Catarrhini</taxon>
        <taxon>Hominidae</taxon>
        <taxon>Homo</taxon>
    </lineage>
</organism>
<keyword id="KW-0002">3D-structure</keyword>
<keyword id="KW-0025">Alternative splicing</keyword>
<keyword id="KW-0067">ATP-binding</keyword>
<keyword id="KW-1003">Cell membrane</keyword>
<keyword id="KW-1015">Disulfide bond</keyword>
<keyword id="KW-0325">Glycoprotein</keyword>
<keyword id="KW-0407">Ion channel</keyword>
<keyword id="KW-0406">Ion transport</keyword>
<keyword id="KW-1071">Ligand-gated ion channel</keyword>
<keyword id="KW-0458">Lysosome</keyword>
<keyword id="KW-0472">Membrane</keyword>
<keyword id="KW-0547">Nucleotide-binding</keyword>
<keyword id="KW-1267">Proteomics identification</keyword>
<keyword id="KW-0675">Receptor</keyword>
<keyword id="KW-1185">Reference proteome</keyword>
<keyword id="KW-0812">Transmembrane</keyword>
<keyword id="KW-1133">Transmembrane helix</keyword>
<keyword id="KW-0813">Transport</keyword>
<accession>Q99571</accession>
<accession>E7EPF7</accession>
<accession>F6RU17</accession>
<accession>O00450</accession>
<accession>O14722</accession>
<accession>Q5U089</accession>
<accession>Q5U090</accession>
<accession>Q8N4N1</accession>
<accession>Q9UBG9</accession>
<name>P2RX4_HUMAN</name>
<proteinExistence type="evidence at protein level"/>
<sequence length="388" mass="43369">MAGCCAALAAFLFEYDTPRIVLIRSRKVGLMNRAVQLLILAYVIGWVFVWEKGYQETDSVVSSVTTKVKGVAVTNTSKLGFRIWDVADYVIPAQEENSLFVMTNVILTMNQTQGLCPEIPDATTVCKSDASCTAGSAGTHSNGVSTGRCVAFNGSVKTCEVAAWCPVEDDTHVPQPAFLKAAENFTLLVKNNIWYPKFNFSKRNILPNITTTYLKSCIYDAKTDPFCPIFRLGKIVENAGHSFQDMAVEGGIMGIQVNWDCNLDRAASLCLPRYSFRRLDTRDVEHNVSPGYNFRFAKYYRDLAGNEQRTLIKAYGIRFDIIVFGKAGKFDIIPTMINIGSGLALLGMATVLCDIIVLYCMKKRLYYREKKYKYVEDYEQGLASELDQ</sequence>
<feature type="chain" id="PRO_0000161553" description="P2X purinoceptor 4">
    <location>
        <begin position="1"/>
        <end position="388"/>
    </location>
</feature>
<feature type="topological domain" description="Cytoplasmic" evidence="4">
    <location>
        <begin position="1"/>
        <end position="33"/>
    </location>
</feature>
<feature type="transmembrane region" description="Helical; Name=1" evidence="4">
    <location>
        <begin position="34"/>
        <end position="54"/>
    </location>
</feature>
<feature type="topological domain" description="Extracellular" evidence="4">
    <location>
        <begin position="55"/>
        <end position="338"/>
    </location>
</feature>
<feature type="transmembrane region" description="Helical; Name=2" evidence="4">
    <location>
        <begin position="339"/>
        <end position="359"/>
    </location>
</feature>
<feature type="topological domain" description="Cytoplasmic" evidence="4">
    <location>
        <begin position="360"/>
        <end position="388"/>
    </location>
</feature>
<feature type="binding site" evidence="1">
    <location>
        <position position="67"/>
    </location>
    <ligand>
        <name>ATP</name>
        <dbReference type="ChEBI" id="CHEBI:30616"/>
    </ligand>
</feature>
<feature type="binding site" evidence="1">
    <location>
        <position position="67"/>
    </location>
    <ligand>
        <name>CTP</name>
        <dbReference type="ChEBI" id="CHEBI:37563"/>
    </ligand>
</feature>
<feature type="binding site" evidence="1">
    <location>
        <position position="69"/>
    </location>
    <ligand>
        <name>ATP</name>
        <dbReference type="ChEBI" id="CHEBI:30616"/>
    </ligand>
</feature>
<feature type="binding site" evidence="1">
    <location>
        <position position="69"/>
    </location>
    <ligand>
        <name>CTP</name>
        <dbReference type="ChEBI" id="CHEBI:37563"/>
    </ligand>
</feature>
<feature type="binding site" evidence="1">
    <location>
        <position position="186"/>
    </location>
    <ligand>
        <name>ATP</name>
        <dbReference type="ChEBI" id="CHEBI:30616"/>
    </ligand>
</feature>
<feature type="binding site" evidence="1">
    <location>
        <position position="186"/>
    </location>
    <ligand>
        <name>CTP</name>
        <dbReference type="ChEBI" id="CHEBI:37563"/>
    </ligand>
</feature>
<feature type="binding site" evidence="1">
    <location>
        <position position="188"/>
    </location>
    <ligand>
        <name>ATP</name>
        <dbReference type="ChEBI" id="CHEBI:30616"/>
    </ligand>
</feature>
<feature type="binding site" evidence="1">
    <location>
        <position position="293"/>
    </location>
    <ligand>
        <name>ATP</name>
        <dbReference type="ChEBI" id="CHEBI:30616"/>
    </ligand>
</feature>
<feature type="binding site" evidence="1">
    <location>
        <position position="293"/>
    </location>
    <ligand>
        <name>CTP</name>
        <dbReference type="ChEBI" id="CHEBI:37563"/>
    </ligand>
</feature>
<feature type="binding site" evidence="1">
    <location>
        <position position="295"/>
    </location>
    <ligand>
        <name>ATP</name>
        <dbReference type="ChEBI" id="CHEBI:30616"/>
    </ligand>
</feature>
<feature type="binding site" evidence="1">
    <location>
        <position position="295"/>
    </location>
    <ligand>
        <name>CTP</name>
        <dbReference type="ChEBI" id="CHEBI:37563"/>
    </ligand>
</feature>
<feature type="binding site" evidence="1">
    <location>
        <position position="313"/>
    </location>
    <ligand>
        <name>ATP</name>
        <dbReference type="ChEBI" id="CHEBI:30616"/>
    </ligand>
</feature>
<feature type="binding site" evidence="1">
    <location>
        <position position="313"/>
    </location>
    <ligand>
        <name>CTP</name>
        <dbReference type="ChEBI" id="CHEBI:37563"/>
    </ligand>
</feature>
<feature type="glycosylation site" description="N-linked (GlcNAc...) asparagine" evidence="4">
    <location>
        <position position="75"/>
    </location>
</feature>
<feature type="glycosylation site" description="N-linked (GlcNAc...) asparagine" evidence="4">
    <location>
        <position position="110"/>
    </location>
</feature>
<feature type="glycosylation site" description="N-linked (GlcNAc...) asparagine" evidence="4">
    <location>
        <position position="153"/>
    </location>
</feature>
<feature type="glycosylation site" description="N-linked (GlcNAc...) asparagine" evidence="7">
    <location>
        <position position="184"/>
    </location>
</feature>
<feature type="glycosylation site" description="N-linked (GlcNAc...) asparagine" evidence="4">
    <location>
        <position position="199"/>
    </location>
</feature>
<feature type="glycosylation site" description="N-linked (GlcNAc...) asparagine" evidence="4">
    <location>
        <position position="208"/>
    </location>
</feature>
<feature type="disulfide bond" evidence="1">
    <location>
        <begin position="116"/>
        <end position="165"/>
    </location>
</feature>
<feature type="disulfide bond" evidence="1">
    <location>
        <begin position="126"/>
        <end position="149"/>
    </location>
</feature>
<feature type="disulfide bond" evidence="1">
    <location>
        <begin position="132"/>
        <end position="159"/>
    </location>
</feature>
<feature type="disulfide bond" evidence="1">
    <location>
        <begin position="217"/>
        <end position="227"/>
    </location>
</feature>
<feature type="disulfide bond" evidence="1">
    <location>
        <begin position="261"/>
        <end position="270"/>
    </location>
</feature>
<feature type="splice variant" id="VSP_053812" description="In isoform 2." evidence="19">
    <original>G</original>
    <variation>GCYHPHLAEVEMESPRR</variation>
    <location>
        <position position="45"/>
    </location>
</feature>
<feature type="splice variant" id="VSP_053813" description="In isoform 3." evidence="18">
    <location>
        <begin position="149"/>
        <end position="175"/>
    </location>
</feature>
<feature type="sequence variant" id="VAR_079856" description="In dbSNP:rs200492184." evidence="12">
    <original>G</original>
    <variation>C</variation>
    <location>
        <position position="3"/>
    </location>
</feature>
<feature type="sequence variant" id="VAR_028307" description="Does not change ATP-induced inward current; does not change affinity for ATP; dbSNP:rs1044249." evidence="8 14 15 16">
    <original>A</original>
    <variation>S</variation>
    <location>
        <position position="6"/>
    </location>
</feature>
<feature type="sequence variant" id="VAR_079857" description="Does not change protein expression; does not affect membrane subcellular location; increases ATP-induced inward current; dbSNP:rs765866317." evidence="12">
    <original>G</original>
    <variation>S</variation>
    <location>
        <position position="135"/>
    </location>
</feature>
<feature type="sequence variant" id="VAR_014942" description="Does not change ATP-induced inward current; does not change affinity for ATP; dbSNP:rs25644." evidence="6 8 12">
    <original>S</original>
    <variation>G</variation>
    <location>
        <position position="242"/>
    </location>
</feature>
<feature type="sequence variant" id="VAR_079858" description="May influence susceptibility to multiple sclerosis in the presence of variants M-205 and S-361 in P2RX7; does not affect membrane subcellular location; reduces ATP-induced inward current; decreases affinity for ATP; dbSNP:rs28360472." evidence="8 9 12 17">
    <original>Y</original>
    <variation>C</variation>
    <location>
        <position position="315"/>
    </location>
</feature>
<feature type="mutagenesis site" description="Does not change ATP-induced inward current. Does not change affinity for ATP." evidence="8">
    <original>I</original>
    <variation>V</variation>
    <location>
        <position position="119"/>
    </location>
</feature>
<feature type="sequence conflict" description="In Ref. 8; AAB66834." evidence="19" ref="8">
    <original>D</original>
    <variation>S</variation>
    <location>
        <position position="121"/>
    </location>
</feature>
<feature type="sequence conflict" description="In Ref. 8; AAB66834." evidence="19" ref="8">
    <original>R</original>
    <variation>W</variation>
    <location>
        <position position="148"/>
    </location>
</feature>
<feature type="sequence conflict" description="In Ref. 8; AAB66834." evidence="19" ref="8">
    <original>L</original>
    <variation>F</variation>
    <location>
        <position position="179"/>
    </location>
</feature>
<feature type="sequence conflict" description="In Ref. 8; AAB66834." evidence="19" ref="8">
    <original>N</original>
    <variation>I</variation>
    <location>
        <position position="238"/>
    </location>
</feature>
<evidence type="ECO:0000250" key="1">
    <source>
        <dbReference type="UniProtKB" id="F8W463"/>
    </source>
</evidence>
<evidence type="ECO:0000250" key="2">
    <source>
        <dbReference type="UniProtKB" id="P51577"/>
    </source>
</evidence>
<evidence type="ECO:0000250" key="3">
    <source>
        <dbReference type="UniProtKB" id="Q9JJX6"/>
    </source>
</evidence>
<evidence type="ECO:0000255" key="4"/>
<evidence type="ECO:0000269" key="5">
    <source>
    </source>
</evidence>
<evidence type="ECO:0000269" key="6">
    <source>
    </source>
</evidence>
<evidence type="ECO:0000269" key="7">
    <source>
    </source>
</evidence>
<evidence type="ECO:0000269" key="8">
    <source>
    </source>
</evidence>
<evidence type="ECO:0000269" key="9">
    <source>
    </source>
</evidence>
<evidence type="ECO:0000269" key="10">
    <source>
    </source>
</evidence>
<evidence type="ECO:0000269" key="11">
    <source>
    </source>
</evidence>
<evidence type="ECO:0000269" key="12">
    <source>
    </source>
</evidence>
<evidence type="ECO:0000269" key="13">
    <source>
    </source>
</evidence>
<evidence type="ECO:0000269" key="14">
    <source>
    </source>
</evidence>
<evidence type="ECO:0000269" key="15">
    <source ref="3"/>
</evidence>
<evidence type="ECO:0000269" key="16">
    <source ref="4"/>
</evidence>
<evidence type="ECO:0000269" key="17">
    <source ref="7"/>
</evidence>
<evidence type="ECO:0000303" key="18">
    <source ref="4"/>
</evidence>
<evidence type="ECO:0000305" key="19"/>
<dbReference type="EMBL" id="Y07684">
    <property type="protein sequence ID" value="CAA68948.1"/>
    <property type="molecule type" value="mRNA"/>
</dbReference>
<dbReference type="EMBL" id="U87270">
    <property type="protein sequence ID" value="AAD00556.1"/>
    <property type="molecule type" value="Genomic_DNA"/>
</dbReference>
<dbReference type="EMBL" id="U85971">
    <property type="protein sequence ID" value="AAD00556.1"/>
    <property type="status" value="JOINED"/>
    <property type="molecule type" value="Genomic_DNA"/>
</dbReference>
<dbReference type="EMBL" id="U85972">
    <property type="protein sequence ID" value="AAD00556.1"/>
    <property type="status" value="JOINED"/>
    <property type="molecule type" value="Genomic_DNA"/>
</dbReference>
<dbReference type="EMBL" id="U85973">
    <property type="protein sequence ID" value="AAD00556.1"/>
    <property type="status" value="JOINED"/>
    <property type="molecule type" value="Genomic_DNA"/>
</dbReference>
<dbReference type="EMBL" id="U85974">
    <property type="protein sequence ID" value="AAD00556.1"/>
    <property type="status" value="JOINED"/>
    <property type="molecule type" value="Genomic_DNA"/>
</dbReference>
<dbReference type="EMBL" id="U85975">
    <property type="protein sequence ID" value="AAD00556.1"/>
    <property type="status" value="JOINED"/>
    <property type="molecule type" value="Genomic_DNA"/>
</dbReference>
<dbReference type="EMBL" id="U83993">
    <property type="protein sequence ID" value="AAD00553.1"/>
    <property type="molecule type" value="mRNA"/>
</dbReference>
<dbReference type="EMBL" id="AF191093">
    <property type="protein sequence ID" value="AAF06661.1"/>
    <property type="molecule type" value="Genomic_DNA"/>
</dbReference>
<dbReference type="EMBL" id="BT019738">
    <property type="protein sequence ID" value="AAV38543.1"/>
    <property type="molecule type" value="mRNA"/>
</dbReference>
<dbReference type="EMBL" id="BT019739">
    <property type="protein sequence ID" value="AAV38544.1"/>
    <property type="molecule type" value="mRNA"/>
</dbReference>
<dbReference type="EMBL" id="AC069209">
    <property type="status" value="NOT_ANNOTATED_CDS"/>
    <property type="molecule type" value="Genomic_DNA"/>
</dbReference>
<dbReference type="EMBL" id="BC033826">
    <property type="protein sequence ID" value="AAH33826.1"/>
    <property type="molecule type" value="mRNA"/>
</dbReference>
<dbReference type="EMBL" id="AF000234">
    <property type="protein sequence ID" value="AAB58405.1"/>
    <property type="molecule type" value="mRNA"/>
</dbReference>
<dbReference type="EMBL" id="AF012903">
    <property type="protein sequence ID" value="AAB66834.1"/>
    <property type="molecule type" value="mRNA"/>
</dbReference>
<dbReference type="CCDS" id="CCDS58282.1">
    <molecule id="Q99571-2"/>
</dbReference>
<dbReference type="CCDS" id="CCDS9214.1">
    <molecule id="Q99571-1"/>
</dbReference>
<dbReference type="RefSeq" id="NP_001243725.1">
    <molecule id="Q99571-2"/>
    <property type="nucleotide sequence ID" value="NM_001256796.2"/>
</dbReference>
<dbReference type="RefSeq" id="NP_001248326.1">
    <molecule id="Q99571-3"/>
    <property type="nucleotide sequence ID" value="NM_001261397.2"/>
</dbReference>
<dbReference type="RefSeq" id="NP_002551.2">
    <molecule id="Q99571-1"/>
    <property type="nucleotide sequence ID" value="NM_002560.2"/>
</dbReference>
<dbReference type="PDB" id="9BQH">
    <property type="method" value="EM"/>
    <property type="resolution" value="2.27 A"/>
    <property type="chains" value="A/B/C=1-388"/>
</dbReference>
<dbReference type="PDB" id="9BQI">
    <property type="method" value="EM"/>
    <property type="resolution" value="2.55 A"/>
    <property type="chains" value="A/B/C=1-388"/>
</dbReference>
<dbReference type="PDB" id="9C48">
    <property type="method" value="EM"/>
    <property type="resolution" value="2.40 A"/>
    <property type="chains" value="A/B/C=1-388"/>
</dbReference>
<dbReference type="PDBsum" id="9BQH"/>
<dbReference type="PDBsum" id="9BQI"/>
<dbReference type="PDBsum" id="9C48"/>
<dbReference type="EMDB" id="EMD-44799"/>
<dbReference type="EMDB" id="EMD-44800"/>
<dbReference type="EMDB" id="EMD-45177"/>
<dbReference type="SMR" id="Q99571"/>
<dbReference type="BioGRID" id="111064">
    <property type="interactions" value="48"/>
</dbReference>
<dbReference type="FunCoup" id="Q99571">
    <property type="interactions" value="695"/>
</dbReference>
<dbReference type="IntAct" id="Q99571">
    <property type="interactions" value="37"/>
</dbReference>
<dbReference type="STRING" id="9606.ENSP00000353032"/>
<dbReference type="BindingDB" id="Q99571"/>
<dbReference type="ChEMBL" id="CHEMBL2104"/>
<dbReference type="DrugBank" id="DB14575">
    <property type="generic name" value="Eslicarbazepine"/>
</dbReference>
<dbReference type="DrugBank" id="DB09119">
    <property type="generic name" value="Eslicarbazepine acetate"/>
</dbReference>
<dbReference type="DrugBank" id="DB01069">
    <property type="generic name" value="Promethazine"/>
</dbReference>
<dbReference type="DrugCentral" id="Q99571"/>
<dbReference type="GuidetoPHARMACOLOGY" id="481"/>
<dbReference type="TCDB" id="1.A.7.1.5">
    <property type="family name" value="the atp-gated p2x receptor cation channel (p2x receptor) family"/>
</dbReference>
<dbReference type="GlyConnect" id="1590">
    <property type="glycosylation" value="12 N-Linked glycans (4 sites)"/>
</dbReference>
<dbReference type="GlyCosmos" id="Q99571">
    <property type="glycosylation" value="6 sites, 11 glycans"/>
</dbReference>
<dbReference type="GlyGen" id="Q99571">
    <property type="glycosylation" value="8 sites, 65 N-linked glycans (5 sites), 1 O-linked glycan (1 site)"/>
</dbReference>
<dbReference type="iPTMnet" id="Q99571"/>
<dbReference type="PhosphoSitePlus" id="Q99571"/>
<dbReference type="SwissPalm" id="Q99571"/>
<dbReference type="BioMuta" id="P2RX4"/>
<dbReference type="DMDM" id="116242696"/>
<dbReference type="jPOST" id="Q99571"/>
<dbReference type="MassIVE" id="Q99571"/>
<dbReference type="PaxDb" id="9606-ENSP00000353032"/>
<dbReference type="PeptideAtlas" id="Q99571"/>
<dbReference type="ProteomicsDB" id="17348"/>
<dbReference type="ProteomicsDB" id="27898"/>
<dbReference type="ProteomicsDB" id="78331">
    <molecule id="Q99571-1"/>
</dbReference>
<dbReference type="Antibodypedia" id="31537">
    <property type="antibodies" value="264 antibodies from 34 providers"/>
</dbReference>
<dbReference type="DNASU" id="5025"/>
<dbReference type="Ensembl" id="ENST00000337233.9">
    <molecule id="Q99571-1"/>
    <property type="protein sequence ID" value="ENSP00000336607.4"/>
    <property type="gene ID" value="ENSG00000135124.16"/>
</dbReference>
<dbReference type="Ensembl" id="ENST00000359949.11">
    <molecule id="Q99571-2"/>
    <property type="protein sequence ID" value="ENSP00000353032.7"/>
    <property type="gene ID" value="ENSG00000135124.16"/>
</dbReference>
<dbReference type="Ensembl" id="ENST00000542067.5">
    <molecule id="Q99571-3"/>
    <property type="protein sequence ID" value="ENSP00000438329.1"/>
    <property type="gene ID" value="ENSG00000135124.16"/>
</dbReference>
<dbReference type="GeneID" id="5025"/>
<dbReference type="KEGG" id="hsa:5025"/>
<dbReference type="MANE-Select" id="ENST00000337233.9">
    <property type="protein sequence ID" value="ENSP00000336607.4"/>
    <property type="RefSeq nucleotide sequence ID" value="NM_002560.3"/>
    <property type="RefSeq protein sequence ID" value="NP_002551.2"/>
</dbReference>
<dbReference type="UCSC" id="uc001tzr.4">
    <molecule id="Q99571-1"/>
    <property type="organism name" value="human"/>
</dbReference>
<dbReference type="AGR" id="HGNC:8535"/>
<dbReference type="CTD" id="5025"/>
<dbReference type="DisGeNET" id="5025"/>
<dbReference type="GeneCards" id="P2RX4"/>
<dbReference type="HGNC" id="HGNC:8535">
    <property type="gene designation" value="P2RX4"/>
</dbReference>
<dbReference type="HPA" id="ENSG00000135124">
    <property type="expression patterns" value="Low tissue specificity"/>
</dbReference>
<dbReference type="MIM" id="600846">
    <property type="type" value="gene"/>
</dbReference>
<dbReference type="neXtProt" id="NX_Q99571"/>
<dbReference type="OpenTargets" id="ENSG00000135124"/>
<dbReference type="PharmGKB" id="PA32864"/>
<dbReference type="VEuPathDB" id="HostDB:ENSG00000135124"/>
<dbReference type="eggNOG" id="ENOG502QSUI">
    <property type="taxonomic scope" value="Eukaryota"/>
</dbReference>
<dbReference type="GeneTree" id="ENSGT01020000230351"/>
<dbReference type="InParanoid" id="Q99571"/>
<dbReference type="OMA" id="NNCVPGY"/>
<dbReference type="OrthoDB" id="494673at2759"/>
<dbReference type="PAN-GO" id="Q99571">
    <property type="GO annotations" value="2 GO annotations based on evolutionary models"/>
</dbReference>
<dbReference type="PhylomeDB" id="Q99571"/>
<dbReference type="TreeFam" id="TF328633"/>
<dbReference type="PathwayCommons" id="Q99571"/>
<dbReference type="Reactome" id="R-HSA-139853">
    <property type="pathway name" value="Elevation of cytosolic Ca2+ levels"/>
</dbReference>
<dbReference type="Reactome" id="R-HSA-418346">
    <property type="pathway name" value="Platelet homeostasis"/>
</dbReference>
<dbReference type="Reactome" id="R-HSA-9660826">
    <property type="pathway name" value="Purinergic signaling in leishmaniasis infection"/>
</dbReference>
<dbReference type="SignaLink" id="Q99571"/>
<dbReference type="BioGRID-ORCS" id="5025">
    <property type="hits" value="12 hits in 1166 CRISPR screens"/>
</dbReference>
<dbReference type="ChiTaRS" id="P2RX4">
    <property type="organism name" value="human"/>
</dbReference>
<dbReference type="GeneWiki" id="P2RX4"/>
<dbReference type="GenomeRNAi" id="5025"/>
<dbReference type="Pharos" id="Q99571">
    <property type="development level" value="Tchem"/>
</dbReference>
<dbReference type="PRO" id="PR:Q99571"/>
<dbReference type="Proteomes" id="UP000005640">
    <property type="component" value="Chromosome 12"/>
</dbReference>
<dbReference type="RNAct" id="Q99571">
    <property type="molecule type" value="protein"/>
</dbReference>
<dbReference type="Bgee" id="ENSG00000135124">
    <property type="expression patterns" value="Expressed in mucosa of transverse colon and 160 other cell types or tissues"/>
</dbReference>
<dbReference type="ExpressionAtlas" id="Q99571">
    <property type="expression patterns" value="baseline and differential"/>
</dbReference>
<dbReference type="GO" id="GO:0044297">
    <property type="term" value="C:cell body"/>
    <property type="evidence" value="ECO:0000250"/>
    <property type="project" value="ARUK-UCL"/>
</dbReference>
<dbReference type="GO" id="GO:0030054">
    <property type="term" value="C:cell junction"/>
    <property type="evidence" value="ECO:0000314"/>
    <property type="project" value="BHF-UCL"/>
</dbReference>
<dbReference type="GO" id="GO:0070062">
    <property type="term" value="C:extracellular exosome"/>
    <property type="evidence" value="ECO:0007005"/>
    <property type="project" value="UniProtKB"/>
</dbReference>
<dbReference type="GO" id="GO:0005765">
    <property type="term" value="C:lysosomal membrane"/>
    <property type="evidence" value="ECO:0000314"/>
    <property type="project" value="UniProtKB"/>
</dbReference>
<dbReference type="GO" id="GO:0016020">
    <property type="term" value="C:membrane"/>
    <property type="evidence" value="ECO:0000314"/>
    <property type="project" value="BHF-UCL"/>
</dbReference>
<dbReference type="GO" id="GO:0048471">
    <property type="term" value="C:perinuclear region of cytoplasm"/>
    <property type="evidence" value="ECO:0000314"/>
    <property type="project" value="BHF-UCL"/>
</dbReference>
<dbReference type="GO" id="GO:0005886">
    <property type="term" value="C:plasma membrane"/>
    <property type="evidence" value="ECO:0000314"/>
    <property type="project" value="UniProtKB"/>
</dbReference>
<dbReference type="GO" id="GO:0098794">
    <property type="term" value="C:postsynapse"/>
    <property type="evidence" value="ECO:0007669"/>
    <property type="project" value="GOC"/>
</dbReference>
<dbReference type="GO" id="GO:0005524">
    <property type="term" value="F:ATP binding"/>
    <property type="evidence" value="ECO:0000305"/>
    <property type="project" value="BHF-UCL"/>
</dbReference>
<dbReference type="GO" id="GO:0045296">
    <property type="term" value="F:cadherin binding"/>
    <property type="evidence" value="ECO:0000353"/>
    <property type="project" value="BHF-UCL"/>
</dbReference>
<dbReference type="GO" id="GO:0005507">
    <property type="term" value="F:copper ion binding"/>
    <property type="evidence" value="ECO:0000250"/>
    <property type="project" value="BHF-UCL"/>
</dbReference>
<dbReference type="GO" id="GO:0004931">
    <property type="term" value="F:extracellularly ATP-gated monoatomic cation channel activity"/>
    <property type="evidence" value="ECO:0000314"/>
    <property type="project" value="UniProtKB"/>
</dbReference>
<dbReference type="GO" id="GO:0042802">
    <property type="term" value="F:identical protein binding"/>
    <property type="evidence" value="ECO:0000353"/>
    <property type="project" value="BHF-UCL"/>
</dbReference>
<dbReference type="GO" id="GO:0099604">
    <property type="term" value="F:ligand-gated calcium channel activity"/>
    <property type="evidence" value="ECO:0000314"/>
    <property type="project" value="BHF-UCL"/>
</dbReference>
<dbReference type="GO" id="GO:0001614">
    <property type="term" value="F:purinergic nucleotide receptor activity"/>
    <property type="evidence" value="ECO:0000314"/>
    <property type="project" value="BHF-UCL"/>
</dbReference>
<dbReference type="GO" id="GO:0005102">
    <property type="term" value="F:signaling receptor binding"/>
    <property type="evidence" value="ECO:0000250"/>
    <property type="project" value="BHF-UCL"/>
</dbReference>
<dbReference type="GO" id="GO:0008270">
    <property type="term" value="F:zinc ion binding"/>
    <property type="evidence" value="ECO:0000250"/>
    <property type="project" value="BHF-UCL"/>
</dbReference>
<dbReference type="GO" id="GO:0097190">
    <property type="term" value="P:apoptotic signaling pathway"/>
    <property type="evidence" value="ECO:0000314"/>
    <property type="project" value="BHF-UCL"/>
</dbReference>
<dbReference type="GO" id="GO:0048266">
    <property type="term" value="P:behavioral response to pain"/>
    <property type="evidence" value="ECO:0000250"/>
    <property type="project" value="ARUK-UCL"/>
</dbReference>
<dbReference type="GO" id="GO:0070588">
    <property type="term" value="P:calcium ion transmembrane transport"/>
    <property type="evidence" value="ECO:0000314"/>
    <property type="project" value="BHF-UCL"/>
</dbReference>
<dbReference type="GO" id="GO:0019722">
    <property type="term" value="P:calcium-mediated signaling"/>
    <property type="evidence" value="ECO:0000304"/>
    <property type="project" value="ARUK-UCL"/>
</dbReference>
<dbReference type="GO" id="GO:0071318">
    <property type="term" value="P:cellular response to ATP"/>
    <property type="evidence" value="ECO:0000314"/>
    <property type="project" value="UniProtKB"/>
</dbReference>
<dbReference type="GO" id="GO:0071294">
    <property type="term" value="P:cellular response to zinc ion"/>
    <property type="evidence" value="ECO:0000250"/>
    <property type="project" value="UniProtKB"/>
</dbReference>
<dbReference type="GO" id="GO:0042118">
    <property type="term" value="P:endothelial cell activation"/>
    <property type="evidence" value="ECO:0000304"/>
    <property type="project" value="BHF-UCL"/>
</dbReference>
<dbReference type="GO" id="GO:0051899">
    <property type="term" value="P:membrane depolarization"/>
    <property type="evidence" value="ECO:0000314"/>
    <property type="project" value="BHF-UCL"/>
</dbReference>
<dbReference type="GO" id="GO:0034220">
    <property type="term" value="P:monoatomic ion transmembrane transport"/>
    <property type="evidence" value="ECO:0000314"/>
    <property type="project" value="UniProtKB"/>
</dbReference>
<dbReference type="GO" id="GO:0010614">
    <property type="term" value="P:negative regulation of cardiac muscle hypertrophy"/>
    <property type="evidence" value="ECO:0000315"/>
    <property type="project" value="BHF-UCL"/>
</dbReference>
<dbReference type="GO" id="GO:0043536">
    <property type="term" value="P:positive regulation of blood vessel endothelial cell migration"/>
    <property type="evidence" value="ECO:0000315"/>
    <property type="project" value="CAFA"/>
</dbReference>
<dbReference type="GO" id="GO:0051928">
    <property type="term" value="P:positive regulation of calcium ion transport"/>
    <property type="evidence" value="ECO:0000303"/>
    <property type="project" value="BHF-UCL"/>
</dbReference>
<dbReference type="GO" id="GO:0010524">
    <property type="term" value="P:positive regulation of calcium ion transport into cytosol"/>
    <property type="evidence" value="ECO:0000314"/>
    <property type="project" value="BHF-UCL"/>
</dbReference>
<dbReference type="GO" id="GO:0050850">
    <property type="term" value="P:positive regulation of calcium-mediated signaling"/>
    <property type="evidence" value="ECO:0000314"/>
    <property type="project" value="BHF-UCL"/>
</dbReference>
<dbReference type="GO" id="GO:2001028">
    <property type="term" value="P:positive regulation of endothelial cell chemotaxis"/>
    <property type="evidence" value="ECO:0000315"/>
    <property type="project" value="CAFA"/>
</dbReference>
<dbReference type="GO" id="GO:1904141">
    <property type="term" value="P:positive regulation of microglial cell migration"/>
    <property type="evidence" value="ECO:0000250"/>
    <property type="project" value="ARUK-UCL"/>
</dbReference>
<dbReference type="GO" id="GO:0045429">
    <property type="term" value="P:positive regulation of nitric oxide biosynthetic process"/>
    <property type="evidence" value="ECO:0000303"/>
    <property type="project" value="BHF-UCL"/>
</dbReference>
<dbReference type="GO" id="GO:0051897">
    <property type="term" value="P:positive regulation of phosphatidylinositol 3-kinase/protein kinase B signal transduction"/>
    <property type="evidence" value="ECO:0000250"/>
    <property type="project" value="ARUK-UCL"/>
</dbReference>
<dbReference type="GO" id="GO:0032308">
    <property type="term" value="P:positive regulation of prostaglandin secretion"/>
    <property type="evidence" value="ECO:0000303"/>
    <property type="project" value="BHF-UCL"/>
</dbReference>
<dbReference type="GO" id="GO:0035590">
    <property type="term" value="P:purinergic nucleotide receptor signaling pathway"/>
    <property type="evidence" value="ECO:0000315"/>
    <property type="project" value="BHF-UCL"/>
</dbReference>
<dbReference type="GO" id="GO:0008217">
    <property type="term" value="P:regulation of blood pressure"/>
    <property type="evidence" value="ECO:0000315"/>
    <property type="project" value="BHF-UCL"/>
</dbReference>
<dbReference type="GO" id="GO:0055117">
    <property type="term" value="P:regulation of cardiac muscle contraction"/>
    <property type="evidence" value="ECO:0000315"/>
    <property type="project" value="BHF-UCL"/>
</dbReference>
<dbReference type="GO" id="GO:0050920">
    <property type="term" value="P:regulation of chemotaxis"/>
    <property type="evidence" value="ECO:0000250"/>
    <property type="project" value="ARUK-UCL"/>
</dbReference>
<dbReference type="GO" id="GO:0002028">
    <property type="term" value="P:regulation of sodium ion transport"/>
    <property type="evidence" value="ECO:0000250"/>
    <property type="project" value="BHF-UCL"/>
</dbReference>
<dbReference type="GO" id="GO:0055119">
    <property type="term" value="P:relaxation of cardiac muscle"/>
    <property type="evidence" value="ECO:0000315"/>
    <property type="project" value="BHF-UCL"/>
</dbReference>
<dbReference type="GO" id="GO:0033198">
    <property type="term" value="P:response to ATP"/>
    <property type="evidence" value="ECO:0000314"/>
    <property type="project" value="BHF-UCL"/>
</dbReference>
<dbReference type="GO" id="GO:0048678">
    <property type="term" value="P:response to axon injury"/>
    <property type="evidence" value="ECO:0000250"/>
    <property type="project" value="ARUK-UCL"/>
</dbReference>
<dbReference type="GO" id="GO:0034405">
    <property type="term" value="P:response to fluid shear stress"/>
    <property type="evidence" value="ECO:0000314"/>
    <property type="project" value="BHF-UCL"/>
</dbReference>
<dbReference type="GO" id="GO:0002931">
    <property type="term" value="P:response to ischemia"/>
    <property type="evidence" value="ECO:0000250"/>
    <property type="project" value="ARUK-UCL"/>
</dbReference>
<dbReference type="GO" id="GO:0019233">
    <property type="term" value="P:sensory perception of pain"/>
    <property type="evidence" value="ECO:0000250"/>
    <property type="project" value="ARUK-UCL"/>
</dbReference>
<dbReference type="GO" id="GO:0050975">
    <property type="term" value="P:sensory perception of touch"/>
    <property type="evidence" value="ECO:0000250"/>
    <property type="project" value="ARUK-UCL"/>
</dbReference>
<dbReference type="GO" id="GO:0007165">
    <property type="term" value="P:signal transduction"/>
    <property type="evidence" value="ECO:0000314"/>
    <property type="project" value="BHF-UCL"/>
</dbReference>
<dbReference type="GO" id="GO:0001894">
    <property type="term" value="P:tissue homeostasis"/>
    <property type="evidence" value="ECO:0000303"/>
    <property type="project" value="BHF-UCL"/>
</dbReference>
<dbReference type="FunFam" id="1.10.287.940:FF:000001">
    <property type="entry name" value="P2X purinoceptor"/>
    <property type="match status" value="1"/>
</dbReference>
<dbReference type="FunFam" id="2.60.490.10:FF:000001">
    <property type="entry name" value="P2X purinoceptor"/>
    <property type="match status" value="1"/>
</dbReference>
<dbReference type="FunFam" id="1.10.287.940:FF:000010">
    <property type="entry name" value="P2X receptor E"/>
    <property type="match status" value="1"/>
</dbReference>
<dbReference type="Gene3D" id="1.10.287.940">
    <property type="entry name" value="atp-gated p2x4 ion channel"/>
    <property type="match status" value="1"/>
</dbReference>
<dbReference type="Gene3D" id="2.60.490.10">
    <property type="entry name" value="atp-gated p2x4 ion channel domain"/>
    <property type="match status" value="1"/>
</dbReference>
<dbReference type="InterPro" id="IPR003047">
    <property type="entry name" value="P2X4_purnocptor"/>
</dbReference>
<dbReference type="InterPro" id="IPR027309">
    <property type="entry name" value="P2X_extracellular_dom_sf"/>
</dbReference>
<dbReference type="InterPro" id="IPR001429">
    <property type="entry name" value="P2X_purnocptor"/>
</dbReference>
<dbReference type="InterPro" id="IPR053792">
    <property type="entry name" value="P2X_RECEPTOR_CS"/>
</dbReference>
<dbReference type="NCBIfam" id="TIGR00863">
    <property type="entry name" value="P2X"/>
    <property type="match status" value="1"/>
</dbReference>
<dbReference type="PANTHER" id="PTHR10125">
    <property type="entry name" value="P2X PURINOCEPTOR"/>
    <property type="match status" value="1"/>
</dbReference>
<dbReference type="PANTHER" id="PTHR10125:SF18">
    <property type="entry name" value="P2X PURINOCEPTOR 4"/>
    <property type="match status" value="1"/>
</dbReference>
<dbReference type="Pfam" id="PF00864">
    <property type="entry name" value="P2X_receptor"/>
    <property type="match status" value="1"/>
</dbReference>
<dbReference type="PIRSF" id="PIRSF005713">
    <property type="entry name" value="P2X_purinoceptor"/>
    <property type="match status" value="1"/>
</dbReference>
<dbReference type="PRINTS" id="PR01311">
    <property type="entry name" value="P2X4RECEPTOR"/>
</dbReference>
<dbReference type="PRINTS" id="PR01307">
    <property type="entry name" value="P2XRECEPTOR"/>
</dbReference>
<dbReference type="PROSITE" id="PS01212">
    <property type="entry name" value="P2X_RECEPTOR"/>
    <property type="match status" value="1"/>
</dbReference>
<comment type="function">
    <text evidence="2 3 13 14">ATP-gated nonselective transmembrane cation channel permeable to potassium, sodium and calcium (PubMed:9016352). CTP, but not GTP or UTP, functions as a weak affinity agonist for P2RX4 (By similarity). Activated by extracellularly released ATP, it plays multiple role in immunity and central nervous system physiology (PubMed:35165166). Plays a key role in initial steps of T-cell activation and Ca(2+) microdomain formation (By similarity). Also participates in basal T-cell activity without TCR/CD3 stimulation (By similarity). Promotes the differentiation and activation of Th17 cells via expression of retinoic acid-related orphan receptor C/RORC (PubMed:35165166). Upon activation, drives microglia motility via the PI3K/Akt pathway (By similarity). Could also function as an ATP-gated cation channel of lysosomal membranes (By similarity).</text>
</comment>
<comment type="catalytic activity">
    <reaction evidence="14">
        <text>K(+)(in) = K(+)(out)</text>
        <dbReference type="Rhea" id="RHEA:29463"/>
        <dbReference type="ChEBI" id="CHEBI:29103"/>
    </reaction>
</comment>
<comment type="catalytic activity">
    <reaction evidence="14">
        <text>Na(+)(in) = Na(+)(out)</text>
        <dbReference type="Rhea" id="RHEA:34963"/>
        <dbReference type="ChEBI" id="CHEBI:29101"/>
    </reaction>
</comment>
<comment type="catalytic activity">
    <reaction evidence="14">
        <text>Ca(2+)(in) = Ca(2+)(out)</text>
        <dbReference type="Rhea" id="RHEA:29671"/>
        <dbReference type="ChEBI" id="CHEBI:29108"/>
    </reaction>
</comment>
<comment type="activity regulation">
    <text evidence="2 14">Activated by ATP (PubMed:9016352). pH-dependent and inhibited by acidic pH (By similarity).</text>
</comment>
<comment type="subunit">
    <text evidence="2 11">Functional P2RXs are organized as homomeric and heteromeric trimers. Forms heterotrimer with P2RX1 (By similarity). Interacts with P2RX7 (via C-terminus); this interaction is functional only in the presence of ATP (PubMed:26456657). Forms heterotrimer with P2RX4; functional differences between homomeric P2RX4 and P2RX4/6 heterotrimer are minor (By similarity). Interacts with AP1M2 (By similarity).</text>
</comment>
<comment type="interaction">
    <interactant intactId="EBI-2828248">
        <id>Q99571</id>
    </interactant>
    <interactant intactId="EBI-10239299">
        <id>Q9NQM4</id>
        <label>DNAAF6</label>
    </interactant>
    <organismsDiffer>false</organismsDiffer>
    <experiments>3</experiments>
</comment>
<comment type="interaction">
    <interactant intactId="EBI-2828248">
        <id>Q99571</id>
    </interactant>
    <interactant intactId="EBI-11959885">
        <id>Q07627</id>
        <label>KRTAP1-1</label>
    </interactant>
    <organismsDiffer>false</organismsDiffer>
    <experiments>3</experiments>
</comment>
<comment type="interaction">
    <interactant intactId="EBI-2828248">
        <id>Q99571</id>
    </interactant>
    <interactant intactId="EBI-11953334">
        <id>P60328</id>
        <label>KRTAP12-3</label>
    </interactant>
    <organismsDiffer>false</organismsDiffer>
    <experiments>3</experiments>
</comment>
<comment type="interaction">
    <interactant intactId="EBI-2828248">
        <id>Q99571</id>
    </interactant>
    <interactant intactId="EBI-3958099">
        <id>P26371</id>
        <label>KRTAP5-9</label>
    </interactant>
    <organismsDiffer>false</organismsDiffer>
    <experiments>3</experiments>
</comment>
<comment type="interaction">
    <interactant intactId="EBI-2828248">
        <id>Q99571</id>
    </interactant>
    <interactant intactId="EBI-945833">
        <id>Q7Z3S9</id>
        <label>NOTCH2NLA</label>
    </interactant>
    <organismsDiffer>false</organismsDiffer>
    <experiments>3</experiments>
</comment>
<comment type="interaction">
    <interactant intactId="EBI-2828248">
        <id>Q99571</id>
    </interactant>
    <interactant intactId="EBI-22310682">
        <id>P0DPK4</id>
        <label>NOTCH2NLC</label>
    </interactant>
    <organismsDiffer>false</organismsDiffer>
    <experiments>3</experiments>
</comment>
<comment type="subcellular location">
    <subcellularLocation>
        <location evidence="5 9 12">Cell membrane</location>
        <topology evidence="1">Multi-pass membrane protein</topology>
    </subcellularLocation>
    <subcellularLocation>
        <location evidence="10">Lysosome membrane</location>
        <topology evidence="4">Multi-pass membrane protein</topology>
    </subcellularLocation>
</comment>
<comment type="alternative products">
    <event type="alternative splicing"/>
    <isoform>
        <id>Q99571-1</id>
        <name>1</name>
        <sequence type="displayed"/>
    </isoform>
    <isoform>
        <id>Q99571-2</id>
        <name>2</name>
        <sequence type="described" ref="VSP_053812"/>
    </isoform>
    <isoform>
        <id>Q99571-3</id>
        <name>3</name>
        <sequence type="described" ref="VSP_053813"/>
    </isoform>
</comment>
<comment type="similarity">
    <text evidence="19">Belongs to the P2X receptor family.</text>
</comment>
<comment type="online information" name="Wikipedia">
    <link uri="https://en.wikipedia.org/wiki/P2X_receptor"/>
    <text>P2X receptor entry</text>
</comment>
<reference key="1">
    <citation type="journal article" date="1997" name="Mol. Pharmacol.">
        <title>Characterization of recombinant human P2X4 receptor reveals pharmacological differences to the rat homologue.</title>
        <authorList>
            <person name="Garcia-Guzman M."/>
            <person name="Soto F."/>
            <person name="Gomez-Hernandez J.M."/>
            <person name="Lund P.E."/>
            <person name="Stuhmer W."/>
        </authorList>
    </citation>
    <scope>NUCLEOTIDE SEQUENCE [MRNA] (ISOFORM 1)</scope>
    <scope>VARIANT SER-6</scope>
    <scope>FUNCTION</scope>
    <scope>TRANSPORTER ACTIVITY</scope>
    <scope>ACTIVITY REGULATION</scope>
    <source>
        <tissue>Brain</tissue>
    </source>
</reference>
<reference key="2">
    <citation type="submission" date="1997-01" db="EMBL/GenBank/DDBJ databases">
        <title>Transcription map of the 5cM region surrounding the hepatocyte nuclear factor-1a/MODY3 gene on chromosome 12.</title>
        <authorList>
            <person name="Yamagata K."/>
            <person name="Oda N."/>
            <person name="Furuta H."/>
            <person name="Vaxillaire M."/>
            <person name="Southam L."/>
            <person name="Boriraj V."/>
            <person name="Chen X."/>
            <person name="Oda Y."/>
            <person name="Takeda J."/>
            <person name="Yamada S."/>
            <person name="Nishigori H."/>
            <person name="Lebeau M.M."/>
            <person name="Lathrop M."/>
            <person name="Cox R.D."/>
            <person name="Bell G.I."/>
        </authorList>
    </citation>
    <scope>NUCLEOTIDE SEQUENCE [GENOMIC DNA / MRNA] (ISOFORM 1)</scope>
</reference>
<reference key="3">
    <citation type="submission" date="1999-09" db="EMBL/GenBank/DDBJ databases">
        <title>Shear stress downregulates the expression of P2X4 receptor by human endothelial cells.</title>
        <authorList>
            <person name="Korenaga R."/>
            <person name="Yamamoto K."/>
            <person name="Kamiya A."/>
            <person name="Ando J."/>
        </authorList>
    </citation>
    <scope>NUCLEOTIDE SEQUENCE [GENOMIC DNA] (ISOFORM 1)</scope>
    <scope>VARIANT SER-6</scope>
</reference>
<reference key="4">
    <citation type="submission" date="2004-10" db="EMBL/GenBank/DDBJ databases">
        <title>Cloning of human full-length CDSs in BD Creator(TM) system donor vector.</title>
        <authorList>
            <person name="Kalnine N."/>
            <person name="Chen X."/>
            <person name="Rolfs A."/>
            <person name="Halleck A."/>
            <person name="Hines L."/>
            <person name="Eisenstein S."/>
            <person name="Koundinya M."/>
            <person name="Raphael J."/>
            <person name="Moreira D."/>
            <person name="Kelley T."/>
            <person name="LaBaer J."/>
            <person name="Lin Y."/>
            <person name="Phelan M."/>
            <person name="Farmer A."/>
        </authorList>
    </citation>
    <scope>NUCLEOTIDE SEQUENCE [LARGE SCALE MRNA] (ISOFORMS 1 AND 3)</scope>
    <scope>VARIANT SER-6</scope>
</reference>
<reference key="5">
    <citation type="journal article" date="2006" name="Nature">
        <title>The finished DNA sequence of human chromosome 12.</title>
        <authorList>
            <person name="Scherer S.E."/>
            <person name="Muzny D.M."/>
            <person name="Buhay C.J."/>
            <person name="Chen R."/>
            <person name="Cree A."/>
            <person name="Ding Y."/>
            <person name="Dugan-Rocha S."/>
            <person name="Gill R."/>
            <person name="Gunaratne P."/>
            <person name="Harris R.A."/>
            <person name="Hawes A.C."/>
            <person name="Hernandez J."/>
            <person name="Hodgson A.V."/>
            <person name="Hume J."/>
            <person name="Jackson A."/>
            <person name="Khan Z.M."/>
            <person name="Kovar-Smith C."/>
            <person name="Lewis L.R."/>
            <person name="Lozado R.J."/>
            <person name="Metzker M.L."/>
            <person name="Milosavljevic A."/>
            <person name="Miner G.R."/>
            <person name="Montgomery K.T."/>
            <person name="Morgan M.B."/>
            <person name="Nazareth L.V."/>
            <person name="Scott G."/>
            <person name="Sodergren E."/>
            <person name="Song X.-Z."/>
            <person name="Steffen D."/>
            <person name="Lovering R.C."/>
            <person name="Wheeler D.A."/>
            <person name="Worley K.C."/>
            <person name="Yuan Y."/>
            <person name="Zhang Z."/>
            <person name="Adams C.Q."/>
            <person name="Ansari-Lari M.A."/>
            <person name="Ayele M."/>
            <person name="Brown M.J."/>
            <person name="Chen G."/>
            <person name="Chen Z."/>
            <person name="Clerc-Blankenburg K.P."/>
            <person name="Davis C."/>
            <person name="Delgado O."/>
            <person name="Dinh H.H."/>
            <person name="Draper H."/>
            <person name="Gonzalez-Garay M.L."/>
            <person name="Havlak P."/>
            <person name="Jackson L.R."/>
            <person name="Jacob L.S."/>
            <person name="Kelly S.H."/>
            <person name="Li L."/>
            <person name="Li Z."/>
            <person name="Liu J."/>
            <person name="Liu W."/>
            <person name="Lu J."/>
            <person name="Maheshwari M."/>
            <person name="Nguyen B.-V."/>
            <person name="Okwuonu G.O."/>
            <person name="Pasternak S."/>
            <person name="Perez L.M."/>
            <person name="Plopper F.J.H."/>
            <person name="Santibanez J."/>
            <person name="Shen H."/>
            <person name="Tabor P.E."/>
            <person name="Verduzco D."/>
            <person name="Waldron L."/>
            <person name="Wang Q."/>
            <person name="Williams G.A."/>
            <person name="Zhang J."/>
            <person name="Zhou J."/>
            <person name="Allen C.C."/>
            <person name="Amin A.G."/>
            <person name="Anyalebechi V."/>
            <person name="Bailey M."/>
            <person name="Barbaria J.A."/>
            <person name="Bimage K.E."/>
            <person name="Bryant N.P."/>
            <person name="Burch P.E."/>
            <person name="Burkett C.E."/>
            <person name="Burrell K.L."/>
            <person name="Calderon E."/>
            <person name="Cardenas V."/>
            <person name="Carter K."/>
            <person name="Casias K."/>
            <person name="Cavazos I."/>
            <person name="Cavazos S.R."/>
            <person name="Ceasar H."/>
            <person name="Chacko J."/>
            <person name="Chan S.N."/>
            <person name="Chavez D."/>
            <person name="Christopoulos C."/>
            <person name="Chu J."/>
            <person name="Cockrell R."/>
            <person name="Cox C.D."/>
            <person name="Dang M."/>
            <person name="Dathorne S.R."/>
            <person name="David R."/>
            <person name="Davis C.M."/>
            <person name="Davy-Carroll L."/>
            <person name="Deshazo D.R."/>
            <person name="Donlin J.E."/>
            <person name="D'Souza L."/>
            <person name="Eaves K.A."/>
            <person name="Egan A."/>
            <person name="Emery-Cohen A.J."/>
            <person name="Escotto M."/>
            <person name="Flagg N."/>
            <person name="Forbes L.D."/>
            <person name="Gabisi A.M."/>
            <person name="Garza M."/>
            <person name="Hamilton C."/>
            <person name="Henderson N."/>
            <person name="Hernandez O."/>
            <person name="Hines S."/>
            <person name="Hogues M.E."/>
            <person name="Huang M."/>
            <person name="Idlebird D.G."/>
            <person name="Johnson R."/>
            <person name="Jolivet A."/>
            <person name="Jones S."/>
            <person name="Kagan R."/>
            <person name="King L.M."/>
            <person name="Leal B."/>
            <person name="Lebow H."/>
            <person name="Lee S."/>
            <person name="LeVan J.M."/>
            <person name="Lewis L.C."/>
            <person name="London P."/>
            <person name="Lorensuhewa L.M."/>
            <person name="Loulseged H."/>
            <person name="Lovett D.A."/>
            <person name="Lucier A."/>
            <person name="Lucier R.L."/>
            <person name="Ma J."/>
            <person name="Madu R.C."/>
            <person name="Mapua P."/>
            <person name="Martindale A.D."/>
            <person name="Martinez E."/>
            <person name="Massey E."/>
            <person name="Mawhiney S."/>
            <person name="Meador M.G."/>
            <person name="Mendez S."/>
            <person name="Mercado C."/>
            <person name="Mercado I.C."/>
            <person name="Merritt C.E."/>
            <person name="Miner Z.L."/>
            <person name="Minja E."/>
            <person name="Mitchell T."/>
            <person name="Mohabbat F."/>
            <person name="Mohabbat K."/>
            <person name="Montgomery B."/>
            <person name="Moore N."/>
            <person name="Morris S."/>
            <person name="Munidasa M."/>
            <person name="Ngo R.N."/>
            <person name="Nguyen N.B."/>
            <person name="Nickerson E."/>
            <person name="Nwaokelemeh O.O."/>
            <person name="Nwokenkwo S."/>
            <person name="Obregon M."/>
            <person name="Oguh M."/>
            <person name="Oragunye N."/>
            <person name="Oviedo R.J."/>
            <person name="Parish B.J."/>
            <person name="Parker D.N."/>
            <person name="Parrish J."/>
            <person name="Parks K.L."/>
            <person name="Paul H.A."/>
            <person name="Payton B.A."/>
            <person name="Perez A."/>
            <person name="Perrin W."/>
            <person name="Pickens A."/>
            <person name="Primus E.L."/>
            <person name="Pu L.-L."/>
            <person name="Puazo M."/>
            <person name="Quiles M.M."/>
            <person name="Quiroz J.B."/>
            <person name="Rabata D."/>
            <person name="Reeves K."/>
            <person name="Ruiz S.J."/>
            <person name="Shao H."/>
            <person name="Sisson I."/>
            <person name="Sonaike T."/>
            <person name="Sorelle R.P."/>
            <person name="Sutton A.E."/>
            <person name="Svatek A.F."/>
            <person name="Svetz L.A."/>
            <person name="Tamerisa K.S."/>
            <person name="Taylor T.R."/>
            <person name="Teague B."/>
            <person name="Thomas N."/>
            <person name="Thorn R.D."/>
            <person name="Trejos Z.Y."/>
            <person name="Trevino B.K."/>
            <person name="Ukegbu O.N."/>
            <person name="Urban J.B."/>
            <person name="Vasquez L.I."/>
            <person name="Vera V.A."/>
            <person name="Villasana D.M."/>
            <person name="Wang L."/>
            <person name="Ward-Moore S."/>
            <person name="Warren J.T."/>
            <person name="Wei X."/>
            <person name="White F."/>
            <person name="Williamson A.L."/>
            <person name="Wleczyk R."/>
            <person name="Wooden H.S."/>
            <person name="Wooden S.H."/>
            <person name="Yen J."/>
            <person name="Yoon L."/>
            <person name="Yoon V."/>
            <person name="Zorrilla S.E."/>
            <person name="Nelson D."/>
            <person name="Kucherlapati R."/>
            <person name="Weinstock G."/>
            <person name="Gibbs R.A."/>
        </authorList>
    </citation>
    <scope>NUCLEOTIDE SEQUENCE [LARGE SCALE GENOMIC DNA]</scope>
</reference>
<reference key="6">
    <citation type="journal article" date="2004" name="Genome Res.">
        <title>The status, quality, and expansion of the NIH full-length cDNA project: the Mammalian Gene Collection (MGC).</title>
        <authorList>
            <consortium name="The MGC Project Team"/>
        </authorList>
    </citation>
    <scope>NUCLEOTIDE SEQUENCE [LARGE SCALE MRNA] (ISOFORM 1)</scope>
    <scope>VARIANT GLY-242</scope>
    <source>
        <tissue>Blood</tissue>
    </source>
</reference>
<reference key="7">
    <citation type="submission" date="1997-06" db="EMBL/GenBank/DDBJ databases">
        <title>Human P2X purinoceptor.</title>
        <authorList>
            <person name="Takahashi K."/>
            <person name="Korenaga R."/>
            <person name="Kamiya A."/>
            <person name="Ando J."/>
        </authorList>
    </citation>
    <scope>NUCLEOTIDE SEQUENCE [MRNA] OF 35-388 (ISOFORM 1)</scope>
    <scope>VARIANT CYS-315</scope>
</reference>
<reference key="8">
    <citation type="submission" date="1997-07" db="EMBL/GenBank/DDBJ databases">
        <title>Cloning of P2X4 cDNA from human embryonic kidney (HEK) 293 cells.</title>
        <authorList>
            <person name="Chang A.S."/>
            <person name="Chang S.M."/>
        </authorList>
    </citation>
    <scope>NUCLEOTIDE SEQUENCE [MRNA] OF 73-326 (ISOFORM 1)</scope>
    <source>
        <tissue>Kidney</tissue>
    </source>
</reference>
<reference key="9">
    <citation type="journal article" date="1999" name="Neurosci. Lett.">
        <title>Site-specific splice variation of the human P2X4 receptor.</title>
        <authorList>
            <person name="Carpenter D."/>
            <person name="Meadows H.J."/>
            <person name="Brough S."/>
            <person name="Chapman G."/>
            <person name="Clarke C."/>
            <person name="Coldwell M."/>
            <person name="Davis R."/>
            <person name="Harrison D."/>
            <person name="Meakin J."/>
            <person name="McHale M."/>
            <person name="Rice S.Q."/>
            <person name="Tomlinson W.J."/>
            <person name="Wood M."/>
            <person name="Sanger G.J."/>
        </authorList>
    </citation>
    <scope>ALTERNATIVE SPLICING (ISOFORMS 1 AND 2)</scope>
    <scope>FUNCTION</scope>
    <scope>SUBCELLULAR LOCATION</scope>
</reference>
<reference key="10">
    <citation type="journal article" date="2009" name="J. Proteome Res.">
        <title>Glycoproteomics analysis of human liver tissue by combination of multiple enzyme digestion and hydrazide chemistry.</title>
        <authorList>
            <person name="Chen R."/>
            <person name="Jiang X."/>
            <person name="Sun D."/>
            <person name="Han G."/>
            <person name="Wang F."/>
            <person name="Ye M."/>
            <person name="Wang L."/>
            <person name="Zou H."/>
        </authorList>
    </citation>
    <scope>GLYCOSYLATION [LARGE SCALE ANALYSIS] AT ASN-184</scope>
    <source>
        <tissue>Liver</tissue>
    </source>
</reference>
<reference key="11">
    <citation type="journal article" date="2014" name="J. Biol. Chem.">
        <title>P2X4 forms functional ATP-activated cation channels on lysosomal membranes regulated by luminal pH.</title>
        <authorList>
            <person name="Huang P."/>
            <person name="Zou Y."/>
            <person name="Zhong X.Z."/>
            <person name="Cao Q."/>
            <person name="Zhao K."/>
            <person name="Zhu M.X."/>
            <person name="Murrell-Lagnado R."/>
            <person name="Dong X.P."/>
        </authorList>
    </citation>
    <scope>SUBCELLULAR LOCATION</scope>
</reference>
<reference key="12">
    <citation type="journal article" date="2015" name="Biochem. Biophys. Res. Commun.">
        <title>The P2X7/P2X4 interaction shapes the purinergic response in murine macrophages.</title>
        <authorList>
            <person name="Perez-Flores G."/>
            <person name="Levesque S.A."/>
            <person name="Pacheco J."/>
            <person name="Vaca L."/>
            <person name="Lacroix S."/>
            <person name="Perez-Cornejo P."/>
            <person name="Arreola J."/>
        </authorList>
    </citation>
    <scope>INTERACTION WITH P2RX7</scope>
</reference>
<reference key="13">
    <citation type="journal article" date="2022" name="J. Immunol.">
        <title>The Purinergic Receptor P2X4 Promotes Th17 Activation and the Development of Arthritis.</title>
        <authorList>
            <person name="Hamoudi C."/>
            <person name="Zhao C."/>
            <person name="Abderrazak A."/>
            <person name="Salem M."/>
            <person name="Fortin P.R."/>
            <person name="Sevigny J."/>
            <person name="Aoudjit F."/>
        </authorList>
    </citation>
    <scope>FUNCTION</scope>
</reference>
<reference key="14">
    <citation type="journal article" date="2011" name="Hypertension">
        <title>A loss-of-function polymorphism in the human P2X4 receptor is associated with increased pulse pressure.</title>
        <authorList>
            <person name="Stokes L."/>
            <person name="Scurrah K."/>
            <person name="Ellis J.A."/>
            <person name="Cromer B.A."/>
            <person name="Skarratt K.K."/>
            <person name="Gu B.J."/>
            <person name="Harrap S.B."/>
            <person name="Wiley J.S."/>
        </authorList>
    </citation>
    <scope>VARIANTS GLY-242 AND CYS-315</scope>
    <scope>CHARACTERIZATION OF VARIANTS SER-6; GLY-242 AND CYS-315</scope>
    <scope>MUTAGENESIS OF ILE-119</scope>
    <scope>FUNCTION</scope>
</reference>
<reference key="15">
    <citation type="journal article" date="2013" name="FASEB J.">
        <title>A rare functional haplotype of the P2RX4 and P2RX7 genes leads to loss of innate phagocytosis and confers increased risk of age-related macular degeneration.</title>
        <authorList>
            <person name="Gu B.J."/>
            <person name="Baird P.N."/>
            <person name="Vessey K.A."/>
            <person name="Skarratt K.K."/>
            <person name="Fletcher E.L."/>
            <person name="Fuller S.J."/>
            <person name="Richardson A.J."/>
            <person name="Guymer R.H."/>
            <person name="Wiley J.S."/>
        </authorList>
    </citation>
    <scope>VARIANT CYS-315</scope>
    <scope>CHARACTERIZATION OF VARIANT CYS-315</scope>
    <scope>SUBCELLULAR LOCATION</scope>
</reference>
<reference key="16">
    <citation type="journal article" date="2017" name="Hum. Mutat.">
        <title>Purinergic receptors P2RX4 and P2RX7 in familial multiple sclerosis.</title>
        <authorList>
            <person name="Sadovnick A.D."/>
            <person name="Gu B.J."/>
            <person name="Traboulsee A.L."/>
            <person name="Bernales C.Q."/>
            <person name="Encarnacion M."/>
            <person name="Yee I.M."/>
            <person name="Criscuoli M.G."/>
            <person name="Huang X."/>
            <person name="Ou A."/>
            <person name="Milligan C.J."/>
            <person name="Petrou S."/>
            <person name="Wiley J.S."/>
            <person name="Vilarino-Gueell C."/>
        </authorList>
    </citation>
    <scope>VARIANTS CYS-3; SER-135; GLY-242 AND CYS-315</scope>
    <scope>CHARACTERIZATION OF VARIANT SER-135</scope>
    <scope>SUBCELLULAR LOCATION</scope>
    <scope>FUNCTION</scope>
</reference>
<gene>
    <name type="primary">P2RX4</name>
</gene>
<protein>
    <recommendedName>
        <fullName>P2X purinoceptor 4</fullName>
        <shortName>P2X4</shortName>
    </recommendedName>
    <alternativeName>
        <fullName>ATP receptor</fullName>
    </alternativeName>
    <alternativeName>
        <fullName>Purinergic receptor</fullName>
    </alternativeName>
</protein>